<gene>
    <name evidence="1" type="primary">yfbU</name>
    <name type="ordered locus">EcolC_1358</name>
</gene>
<dbReference type="EMBL" id="CP000946">
    <property type="protein sequence ID" value="ACA77024.1"/>
    <property type="molecule type" value="Genomic_DNA"/>
</dbReference>
<dbReference type="RefSeq" id="WP_000426124.1">
    <property type="nucleotide sequence ID" value="NZ_MTFT01000028.1"/>
</dbReference>
<dbReference type="SMR" id="B1IXP8"/>
<dbReference type="KEGG" id="ecl:EcolC_1358"/>
<dbReference type="HOGENOM" id="CLU_101021_1_0_6"/>
<dbReference type="FunFam" id="1.10.3190.10:FF:000001">
    <property type="entry name" value="UPF0304 protein YfbU"/>
    <property type="match status" value="1"/>
</dbReference>
<dbReference type="Gene3D" id="1.10.287.680">
    <property type="entry name" value="Helix hairpin bin"/>
    <property type="match status" value="1"/>
</dbReference>
<dbReference type="Gene3D" id="1.10.3190.10">
    <property type="entry name" value="yfbu gene product, domain 2"/>
    <property type="match status" value="1"/>
</dbReference>
<dbReference type="HAMAP" id="MF_00762">
    <property type="entry name" value="UPF0304"/>
    <property type="match status" value="1"/>
</dbReference>
<dbReference type="InterPro" id="IPR005587">
    <property type="entry name" value="UPF0304_YfbU"/>
</dbReference>
<dbReference type="InterPro" id="IPR023146">
    <property type="entry name" value="YfbU_alpha-helical_sf"/>
</dbReference>
<dbReference type="InterPro" id="IPR023145">
    <property type="entry name" value="YfbU_helix-hairpin_sf"/>
</dbReference>
<dbReference type="NCBIfam" id="NF003936">
    <property type="entry name" value="PRK05445.1"/>
    <property type="match status" value="1"/>
</dbReference>
<dbReference type="Pfam" id="PF03887">
    <property type="entry name" value="YfbU"/>
    <property type="match status" value="1"/>
</dbReference>
<dbReference type="PIRSF" id="PIRSF006272">
    <property type="entry name" value="UCP006272"/>
    <property type="match status" value="1"/>
</dbReference>
<dbReference type="SUPFAM" id="SSF116960">
    <property type="entry name" value="YfbU-like"/>
    <property type="match status" value="1"/>
</dbReference>
<comment type="similarity">
    <text evidence="1">Belongs to the UPF0304 family.</text>
</comment>
<proteinExistence type="inferred from homology"/>
<feature type="chain" id="PRO_1000083530" description="UPF0304 protein YfbU">
    <location>
        <begin position="1"/>
        <end position="164"/>
    </location>
</feature>
<organism>
    <name type="scientific">Escherichia coli (strain ATCC 8739 / DSM 1576 / NBRC 3972 / NCIMB 8545 / WDCM 00012 / Crooks)</name>
    <dbReference type="NCBI Taxonomy" id="481805"/>
    <lineage>
        <taxon>Bacteria</taxon>
        <taxon>Pseudomonadati</taxon>
        <taxon>Pseudomonadota</taxon>
        <taxon>Gammaproteobacteria</taxon>
        <taxon>Enterobacterales</taxon>
        <taxon>Enterobacteriaceae</taxon>
        <taxon>Escherichia</taxon>
    </lineage>
</organism>
<reference key="1">
    <citation type="submission" date="2008-02" db="EMBL/GenBank/DDBJ databases">
        <title>Complete sequence of Escherichia coli C str. ATCC 8739.</title>
        <authorList>
            <person name="Copeland A."/>
            <person name="Lucas S."/>
            <person name="Lapidus A."/>
            <person name="Glavina del Rio T."/>
            <person name="Dalin E."/>
            <person name="Tice H."/>
            <person name="Bruce D."/>
            <person name="Goodwin L."/>
            <person name="Pitluck S."/>
            <person name="Kiss H."/>
            <person name="Brettin T."/>
            <person name="Detter J.C."/>
            <person name="Han C."/>
            <person name="Kuske C.R."/>
            <person name="Schmutz J."/>
            <person name="Larimer F."/>
            <person name="Land M."/>
            <person name="Hauser L."/>
            <person name="Kyrpides N."/>
            <person name="Mikhailova N."/>
            <person name="Ingram L."/>
            <person name="Richardson P."/>
        </authorList>
    </citation>
    <scope>NUCLEOTIDE SEQUENCE [LARGE SCALE GENOMIC DNA]</scope>
    <source>
        <strain>ATCC 8739 / DSM 1576 / NBRC 3972 / NCIMB 8545 / WDCM 00012 / Crooks</strain>
    </source>
</reference>
<sequence length="164" mass="19536">MEMTNAQRLILSNQYKMMTMLDPANAERYRRLQTIIERGYGLQMRELDREFGELKEETCRTIIDIMEMYHALHVSWSNLQDQQSIDERRVTFLGFDAATEARYLGYVRFMVNVEGRYTHFDAGTHGFNAQTPMWEKYQRMLNVWHACPRQYHLSANEINQIINA</sequence>
<evidence type="ECO:0000255" key="1">
    <source>
        <dbReference type="HAMAP-Rule" id="MF_00762"/>
    </source>
</evidence>
<protein>
    <recommendedName>
        <fullName evidence="1">UPF0304 protein YfbU</fullName>
    </recommendedName>
</protein>
<name>YFBU_ECOLC</name>
<accession>B1IXP8</accession>